<organism>
    <name type="scientific">Buchnera aphidicola subsp. Acyrthosiphon pisum (strain 5A)</name>
    <dbReference type="NCBI Taxonomy" id="563178"/>
    <lineage>
        <taxon>Bacteria</taxon>
        <taxon>Pseudomonadati</taxon>
        <taxon>Pseudomonadota</taxon>
        <taxon>Gammaproteobacteria</taxon>
        <taxon>Enterobacterales</taxon>
        <taxon>Erwiniaceae</taxon>
        <taxon>Buchnera</taxon>
    </lineage>
</organism>
<comment type="function">
    <text evidence="1">Catalyzes the reversible conversion of ribose-5-phosphate to ribulose 5-phosphate.</text>
</comment>
<comment type="catalytic activity">
    <reaction evidence="1">
        <text>aldehydo-D-ribose 5-phosphate = D-ribulose 5-phosphate</text>
        <dbReference type="Rhea" id="RHEA:14657"/>
        <dbReference type="ChEBI" id="CHEBI:58121"/>
        <dbReference type="ChEBI" id="CHEBI:58273"/>
        <dbReference type="EC" id="5.3.1.6"/>
    </reaction>
</comment>
<comment type="pathway">
    <text evidence="1">Carbohydrate degradation; pentose phosphate pathway; D-ribose 5-phosphate from D-ribulose 5-phosphate (non-oxidative stage): step 1/1.</text>
</comment>
<comment type="subunit">
    <text evidence="1">Homodimer.</text>
</comment>
<comment type="similarity">
    <text evidence="1">Belongs to the ribose 5-phosphate isomerase family.</text>
</comment>
<keyword id="KW-0413">Isomerase</keyword>
<gene>
    <name evidence="1" type="primary">rpiA</name>
    <name type="ordered locus">BUAP5A_404</name>
</gene>
<dbReference type="EC" id="5.3.1.6" evidence="1"/>
<dbReference type="EMBL" id="CP001161">
    <property type="protein sequence ID" value="ACL30763.1"/>
    <property type="molecule type" value="Genomic_DNA"/>
</dbReference>
<dbReference type="RefSeq" id="WP_009874367.1">
    <property type="nucleotide sequence ID" value="NC_011833.1"/>
</dbReference>
<dbReference type="SMR" id="B8D9J2"/>
<dbReference type="KEGG" id="bap:BUAP5A_404"/>
<dbReference type="HOGENOM" id="CLU_056590_1_1_6"/>
<dbReference type="OrthoDB" id="5870696at2"/>
<dbReference type="UniPathway" id="UPA00115">
    <property type="reaction ID" value="UER00412"/>
</dbReference>
<dbReference type="Proteomes" id="UP000006904">
    <property type="component" value="Chromosome"/>
</dbReference>
<dbReference type="GO" id="GO:0005829">
    <property type="term" value="C:cytosol"/>
    <property type="evidence" value="ECO:0007669"/>
    <property type="project" value="TreeGrafter"/>
</dbReference>
<dbReference type="GO" id="GO:0004751">
    <property type="term" value="F:ribose-5-phosphate isomerase activity"/>
    <property type="evidence" value="ECO:0007669"/>
    <property type="project" value="UniProtKB-UniRule"/>
</dbReference>
<dbReference type="GO" id="GO:0006014">
    <property type="term" value="P:D-ribose metabolic process"/>
    <property type="evidence" value="ECO:0007669"/>
    <property type="project" value="TreeGrafter"/>
</dbReference>
<dbReference type="GO" id="GO:0009052">
    <property type="term" value="P:pentose-phosphate shunt, non-oxidative branch"/>
    <property type="evidence" value="ECO:0007669"/>
    <property type="project" value="UniProtKB-UniRule"/>
</dbReference>
<dbReference type="CDD" id="cd01398">
    <property type="entry name" value="RPI_A"/>
    <property type="match status" value="1"/>
</dbReference>
<dbReference type="FunFam" id="3.30.70.260:FF:000004">
    <property type="entry name" value="Ribose-5-phosphate isomerase A"/>
    <property type="match status" value="1"/>
</dbReference>
<dbReference type="FunFam" id="3.40.50.1360:FF:000001">
    <property type="entry name" value="Ribose-5-phosphate isomerase A"/>
    <property type="match status" value="1"/>
</dbReference>
<dbReference type="Gene3D" id="3.30.70.260">
    <property type="match status" value="1"/>
</dbReference>
<dbReference type="Gene3D" id="3.40.50.1360">
    <property type="match status" value="1"/>
</dbReference>
<dbReference type="HAMAP" id="MF_00170">
    <property type="entry name" value="Rib_5P_isom_A"/>
    <property type="match status" value="1"/>
</dbReference>
<dbReference type="InterPro" id="IPR037171">
    <property type="entry name" value="NagB/RpiA_transferase-like"/>
</dbReference>
<dbReference type="InterPro" id="IPR020672">
    <property type="entry name" value="Ribose5P_isomerase_typA_subgr"/>
</dbReference>
<dbReference type="InterPro" id="IPR004788">
    <property type="entry name" value="Ribose5P_isomerase_type_A"/>
</dbReference>
<dbReference type="NCBIfam" id="NF001924">
    <property type="entry name" value="PRK00702.1"/>
    <property type="match status" value="1"/>
</dbReference>
<dbReference type="NCBIfam" id="TIGR00021">
    <property type="entry name" value="rpiA"/>
    <property type="match status" value="1"/>
</dbReference>
<dbReference type="PANTHER" id="PTHR11934">
    <property type="entry name" value="RIBOSE-5-PHOSPHATE ISOMERASE"/>
    <property type="match status" value="1"/>
</dbReference>
<dbReference type="PANTHER" id="PTHR11934:SF0">
    <property type="entry name" value="RIBOSE-5-PHOSPHATE ISOMERASE"/>
    <property type="match status" value="1"/>
</dbReference>
<dbReference type="Pfam" id="PF06026">
    <property type="entry name" value="Rib_5-P_isom_A"/>
    <property type="match status" value="1"/>
</dbReference>
<dbReference type="SUPFAM" id="SSF75445">
    <property type="entry name" value="D-ribose-5-phosphate isomerase (RpiA), lid domain"/>
    <property type="match status" value="1"/>
</dbReference>
<dbReference type="SUPFAM" id="SSF100950">
    <property type="entry name" value="NagB/RpiA/CoA transferase-like"/>
    <property type="match status" value="1"/>
</dbReference>
<sequence>MNLNKLKKKAAWAALDYIDPGTIIGVGTGTTIFYFIEALGTIKNLIYGAVSSSNSSTVLLKKHGIEVFDLKNFSSLAIYVDSADEINNHMQMIKGGGGALTREKIIASMSKKFVCIIDKSKKVDVLGTFPLPIEIIPMALSYIFREMIKIGGTPKYRKNVITDNGNIIIDVYNLCIKDPISMEKKINSLPGVVTVGLFASRSADIVLIGTQKGIRTINKKENR</sequence>
<protein>
    <recommendedName>
        <fullName evidence="1">Ribose-5-phosphate isomerase A</fullName>
        <ecNumber evidence="1">5.3.1.6</ecNumber>
    </recommendedName>
    <alternativeName>
        <fullName evidence="1">Phosphoriboisomerase A</fullName>
        <shortName evidence="1">PRI</shortName>
    </alternativeName>
</protein>
<feature type="chain" id="PRO_1000194692" description="Ribose-5-phosphate isomerase A">
    <location>
        <begin position="1"/>
        <end position="223"/>
    </location>
</feature>
<feature type="active site" description="Proton acceptor" evidence="1">
    <location>
        <position position="103"/>
    </location>
</feature>
<feature type="binding site" evidence="1">
    <location>
        <begin position="28"/>
        <end position="31"/>
    </location>
    <ligand>
        <name>substrate</name>
    </ligand>
</feature>
<feature type="binding site" evidence="1">
    <location>
        <begin position="81"/>
        <end position="84"/>
    </location>
    <ligand>
        <name>substrate</name>
    </ligand>
</feature>
<feature type="binding site" evidence="1">
    <location>
        <begin position="94"/>
        <end position="97"/>
    </location>
    <ligand>
        <name>substrate</name>
    </ligand>
</feature>
<feature type="binding site" evidence="1">
    <location>
        <position position="121"/>
    </location>
    <ligand>
        <name>substrate</name>
    </ligand>
</feature>
<reference key="1">
    <citation type="journal article" date="2009" name="Science">
        <title>The dynamics and time scale of ongoing genomic erosion in symbiotic bacteria.</title>
        <authorList>
            <person name="Moran N.A."/>
            <person name="McLaughlin H.J."/>
            <person name="Sorek R."/>
        </authorList>
    </citation>
    <scope>NUCLEOTIDE SEQUENCE [LARGE SCALE GENOMIC DNA]</scope>
    <source>
        <strain>5A</strain>
    </source>
</reference>
<name>RPIA_BUCA5</name>
<accession>B8D9J2</accession>
<proteinExistence type="inferred from homology"/>
<evidence type="ECO:0000255" key="1">
    <source>
        <dbReference type="HAMAP-Rule" id="MF_00170"/>
    </source>
</evidence>